<feature type="chain" id="PRO_1000132847" description="Large ribosomal subunit protein uL11">
    <location>
        <begin position="1"/>
        <end position="142"/>
    </location>
</feature>
<protein>
    <recommendedName>
        <fullName evidence="1">Large ribosomal subunit protein uL11</fullName>
    </recommendedName>
    <alternativeName>
        <fullName evidence="2">50S ribosomal protein L11</fullName>
    </alternativeName>
</protein>
<comment type="function">
    <text evidence="1">Forms part of the ribosomal stalk which helps the ribosome interact with GTP-bound translation factors.</text>
</comment>
<comment type="subunit">
    <text evidence="1">Part of the ribosomal stalk of the 50S ribosomal subunit. Interacts with L10 and the large rRNA to form the base of the stalk. L10 forms an elongated spine to which L12 dimers bind in a sequential fashion forming a multimeric L10(L12)X complex.</text>
</comment>
<comment type="PTM">
    <text evidence="1">One or more lysine residues are methylated.</text>
</comment>
<comment type="similarity">
    <text evidence="1">Belongs to the universal ribosomal protein uL11 family.</text>
</comment>
<gene>
    <name evidence="1" type="primary">rplK</name>
    <name type="ordered locus">AB57_0365</name>
</gene>
<name>RL11_ACIB5</name>
<organism>
    <name type="scientific">Acinetobacter baumannii (strain AB0057)</name>
    <dbReference type="NCBI Taxonomy" id="480119"/>
    <lineage>
        <taxon>Bacteria</taxon>
        <taxon>Pseudomonadati</taxon>
        <taxon>Pseudomonadota</taxon>
        <taxon>Gammaproteobacteria</taxon>
        <taxon>Moraxellales</taxon>
        <taxon>Moraxellaceae</taxon>
        <taxon>Acinetobacter</taxon>
        <taxon>Acinetobacter calcoaceticus/baumannii complex</taxon>
    </lineage>
</organism>
<dbReference type="EMBL" id="CP001182">
    <property type="protein sequence ID" value="ACJ39791.1"/>
    <property type="molecule type" value="Genomic_DNA"/>
</dbReference>
<dbReference type="RefSeq" id="WP_001074682.1">
    <property type="nucleotide sequence ID" value="NC_011586.2"/>
</dbReference>
<dbReference type="SMR" id="B7I356"/>
<dbReference type="GeneID" id="9384044"/>
<dbReference type="KEGG" id="abn:AB57_0365"/>
<dbReference type="HOGENOM" id="CLU_074237_2_1_6"/>
<dbReference type="Proteomes" id="UP000007094">
    <property type="component" value="Chromosome"/>
</dbReference>
<dbReference type="GO" id="GO:0022625">
    <property type="term" value="C:cytosolic large ribosomal subunit"/>
    <property type="evidence" value="ECO:0007669"/>
    <property type="project" value="TreeGrafter"/>
</dbReference>
<dbReference type="GO" id="GO:0070180">
    <property type="term" value="F:large ribosomal subunit rRNA binding"/>
    <property type="evidence" value="ECO:0007669"/>
    <property type="project" value="UniProtKB-UniRule"/>
</dbReference>
<dbReference type="GO" id="GO:0003735">
    <property type="term" value="F:structural constituent of ribosome"/>
    <property type="evidence" value="ECO:0007669"/>
    <property type="project" value="InterPro"/>
</dbReference>
<dbReference type="GO" id="GO:0006412">
    <property type="term" value="P:translation"/>
    <property type="evidence" value="ECO:0007669"/>
    <property type="project" value="UniProtKB-UniRule"/>
</dbReference>
<dbReference type="CDD" id="cd00349">
    <property type="entry name" value="Ribosomal_L11"/>
    <property type="match status" value="1"/>
</dbReference>
<dbReference type="FunFam" id="1.10.10.250:FF:000001">
    <property type="entry name" value="50S ribosomal protein L11"/>
    <property type="match status" value="1"/>
</dbReference>
<dbReference type="FunFam" id="3.30.1550.10:FF:000001">
    <property type="entry name" value="50S ribosomal protein L11"/>
    <property type="match status" value="1"/>
</dbReference>
<dbReference type="Gene3D" id="1.10.10.250">
    <property type="entry name" value="Ribosomal protein L11, C-terminal domain"/>
    <property type="match status" value="1"/>
</dbReference>
<dbReference type="Gene3D" id="3.30.1550.10">
    <property type="entry name" value="Ribosomal protein L11/L12, N-terminal domain"/>
    <property type="match status" value="1"/>
</dbReference>
<dbReference type="HAMAP" id="MF_00736">
    <property type="entry name" value="Ribosomal_uL11"/>
    <property type="match status" value="1"/>
</dbReference>
<dbReference type="InterPro" id="IPR000911">
    <property type="entry name" value="Ribosomal_uL11"/>
</dbReference>
<dbReference type="InterPro" id="IPR006519">
    <property type="entry name" value="Ribosomal_uL11_bac-typ"/>
</dbReference>
<dbReference type="InterPro" id="IPR020783">
    <property type="entry name" value="Ribosomal_uL11_C"/>
</dbReference>
<dbReference type="InterPro" id="IPR036769">
    <property type="entry name" value="Ribosomal_uL11_C_sf"/>
</dbReference>
<dbReference type="InterPro" id="IPR020785">
    <property type="entry name" value="Ribosomal_uL11_CS"/>
</dbReference>
<dbReference type="InterPro" id="IPR020784">
    <property type="entry name" value="Ribosomal_uL11_N"/>
</dbReference>
<dbReference type="InterPro" id="IPR036796">
    <property type="entry name" value="Ribosomal_uL11_N_sf"/>
</dbReference>
<dbReference type="NCBIfam" id="TIGR01632">
    <property type="entry name" value="L11_bact"/>
    <property type="match status" value="1"/>
</dbReference>
<dbReference type="PANTHER" id="PTHR11661">
    <property type="entry name" value="60S RIBOSOMAL PROTEIN L12"/>
    <property type="match status" value="1"/>
</dbReference>
<dbReference type="PANTHER" id="PTHR11661:SF1">
    <property type="entry name" value="LARGE RIBOSOMAL SUBUNIT PROTEIN UL11M"/>
    <property type="match status" value="1"/>
</dbReference>
<dbReference type="Pfam" id="PF00298">
    <property type="entry name" value="Ribosomal_L11"/>
    <property type="match status" value="1"/>
</dbReference>
<dbReference type="Pfam" id="PF03946">
    <property type="entry name" value="Ribosomal_L11_N"/>
    <property type="match status" value="1"/>
</dbReference>
<dbReference type="SMART" id="SM00649">
    <property type="entry name" value="RL11"/>
    <property type="match status" value="1"/>
</dbReference>
<dbReference type="SUPFAM" id="SSF54747">
    <property type="entry name" value="Ribosomal L11/L12e N-terminal domain"/>
    <property type="match status" value="1"/>
</dbReference>
<dbReference type="SUPFAM" id="SSF46906">
    <property type="entry name" value="Ribosomal protein L11, C-terminal domain"/>
    <property type="match status" value="1"/>
</dbReference>
<dbReference type="PROSITE" id="PS00359">
    <property type="entry name" value="RIBOSOMAL_L11"/>
    <property type="match status" value="1"/>
</dbReference>
<proteinExistence type="inferred from homology"/>
<sequence>MAKKIDGYIKLQVPAGKANPSPPIGPALGQRGVNIMAFCKEFNAATQKVEPGLPIPVVITVYNDKSFTFIMKTPPASILLKKAAGIQKGSSVPNKTKVGKLTRAQLEEIATTKEPDLTGADLDARVRTIAGSARSMGLEVEL</sequence>
<reference key="1">
    <citation type="journal article" date="2008" name="J. Bacteriol.">
        <title>Comparative genome sequence analysis of multidrug-resistant Acinetobacter baumannii.</title>
        <authorList>
            <person name="Adams M.D."/>
            <person name="Goglin K."/>
            <person name="Molyneaux N."/>
            <person name="Hujer K.M."/>
            <person name="Lavender H."/>
            <person name="Jamison J.J."/>
            <person name="MacDonald I.J."/>
            <person name="Martin K.M."/>
            <person name="Russo T."/>
            <person name="Campagnari A.A."/>
            <person name="Hujer A.M."/>
            <person name="Bonomo R.A."/>
            <person name="Gill S.R."/>
        </authorList>
    </citation>
    <scope>NUCLEOTIDE SEQUENCE [LARGE SCALE GENOMIC DNA]</scope>
    <source>
        <strain>AB0057</strain>
    </source>
</reference>
<keyword id="KW-0488">Methylation</keyword>
<keyword id="KW-0687">Ribonucleoprotein</keyword>
<keyword id="KW-0689">Ribosomal protein</keyword>
<keyword id="KW-0694">RNA-binding</keyword>
<keyword id="KW-0699">rRNA-binding</keyword>
<evidence type="ECO:0000255" key="1">
    <source>
        <dbReference type="HAMAP-Rule" id="MF_00736"/>
    </source>
</evidence>
<evidence type="ECO:0000305" key="2"/>
<accession>B7I356</accession>